<feature type="chain" id="PRO_0000421072" description="Torsin-1A-interacting protein 2, isoform IFRG15">
    <location>
        <begin position="1"/>
        <end position="131"/>
    </location>
</feature>
<feature type="sequence conflict" description="In Ref. 2; BAE30976." evidence="2" ref="2">
    <original>L</original>
    <variation>M</variation>
    <location>
        <position position="95"/>
    </location>
</feature>
<feature type="sequence conflict" description="In Ref. 2; BAE30413." evidence="2" ref="2">
    <original>R</original>
    <variation>K</variation>
    <location>
        <position position="97"/>
    </location>
</feature>
<feature type="sequence conflict" description="In Ref. 2; BAB23037/BAE30413." evidence="2" ref="2">
    <original>K</original>
    <variation>R</variation>
    <location>
        <position position="99"/>
    </location>
</feature>
<evidence type="ECO:0000269" key="1">
    <source ref="1"/>
</evidence>
<evidence type="ECO:0000305" key="2"/>
<name>IFG15_MOUSE</name>
<proteinExistence type="evidence at protein level"/>
<dbReference type="EMBL" id="AJ251363">
    <property type="protein sequence ID" value="CAC13975.1"/>
    <property type="molecule type" value="mRNA"/>
</dbReference>
<dbReference type="EMBL" id="AK003852">
    <property type="protein sequence ID" value="BAB23037.1"/>
    <property type="molecule type" value="mRNA"/>
</dbReference>
<dbReference type="EMBL" id="AK032697">
    <property type="protein sequence ID" value="BAC27991.1"/>
    <property type="molecule type" value="mRNA"/>
</dbReference>
<dbReference type="EMBL" id="AK150117">
    <property type="protein sequence ID" value="BAE29320.1"/>
    <property type="molecule type" value="mRNA"/>
</dbReference>
<dbReference type="EMBL" id="AK150303">
    <property type="protein sequence ID" value="BAE29454.1"/>
    <property type="molecule type" value="mRNA"/>
</dbReference>
<dbReference type="EMBL" id="AK151453">
    <property type="protein sequence ID" value="BAE30413.1"/>
    <property type="molecule type" value="mRNA"/>
</dbReference>
<dbReference type="EMBL" id="AK152137">
    <property type="protein sequence ID" value="BAE30976.1"/>
    <property type="molecule type" value="mRNA"/>
</dbReference>
<dbReference type="EMBL" id="AC159964">
    <property type="status" value="NOT_ANNOTATED_CDS"/>
    <property type="molecule type" value="Genomic_DNA"/>
</dbReference>
<dbReference type="EMBL" id="BC064017">
    <property type="protein sequence ID" value="AAH64017.1"/>
    <property type="molecule type" value="mRNA"/>
</dbReference>
<dbReference type="EMBL" id="BC092059">
    <property type="protein sequence ID" value="AAH92059.1"/>
    <property type="molecule type" value="mRNA"/>
</dbReference>
<dbReference type="CCDS" id="CCDS15388.1">
    <molecule id="Q9ER81-1"/>
</dbReference>
<dbReference type="RefSeq" id="NP_001153652.1">
    <molecule id="Q9ER81-1"/>
    <property type="nucleotide sequence ID" value="NM_001160180.1"/>
</dbReference>
<dbReference type="RefSeq" id="NP_001153653.1">
    <molecule id="Q9ER81-1"/>
    <property type="nucleotide sequence ID" value="NM_001160181.1"/>
</dbReference>
<dbReference type="RefSeq" id="NP_001153654.1">
    <molecule id="Q9ER81-1"/>
    <property type="nucleotide sequence ID" value="NM_001160182.1"/>
</dbReference>
<dbReference type="RefSeq" id="NP_071724.1">
    <molecule id="Q9ER81-1"/>
    <property type="nucleotide sequence ID" value="NM_022329.4"/>
</dbReference>
<dbReference type="BioGRID" id="232245">
    <property type="interactions" value="4"/>
</dbReference>
<dbReference type="PhosphoSitePlus" id="Q9ER81"/>
<dbReference type="ProteomicsDB" id="267105">
    <molecule id="Q9ER81-1"/>
</dbReference>
<dbReference type="Pumba" id="Q9ER81"/>
<dbReference type="Antibodypedia" id="60527">
    <property type="antibodies" value="70 antibodies from 16 providers"/>
</dbReference>
<dbReference type="DNASU" id="240832"/>
<dbReference type="Ensembl" id="ENSMUST00000065648.15">
    <molecule id="Q9ER81-1"/>
    <property type="protein sequence ID" value="ENSMUSP00000067353.9"/>
    <property type="gene ID" value="ENSMUSG00000050565.17"/>
</dbReference>
<dbReference type="Ensembl" id="ENSMUST00000097526.3">
    <molecule id="Q9ER81-1"/>
    <property type="protein sequence ID" value="ENSMUSP00000095133.3"/>
    <property type="gene ID" value="ENSMUSG00000050565.17"/>
</dbReference>
<dbReference type="Ensembl" id="ENSMUST00000111754.9">
    <molecule id="Q9ER81-1"/>
    <property type="protein sequence ID" value="ENSMUSP00000107383.3"/>
    <property type="gene ID" value="ENSMUSG00000050565.17"/>
</dbReference>
<dbReference type="Ensembl" id="ENSMUST00000128941.8">
    <molecule id="Q9ER81-1"/>
    <property type="protein sequence ID" value="ENSMUSP00000135107.2"/>
    <property type="gene ID" value="ENSMUSG00000050565.17"/>
</dbReference>
<dbReference type="GeneID" id="240832"/>
<dbReference type="KEGG" id="mmu:240832"/>
<dbReference type="UCSC" id="uc007dby.2">
    <molecule id="Q9ER81-1"/>
    <property type="organism name" value="mouse"/>
</dbReference>
<dbReference type="AGR" id="MGI:3582695"/>
<dbReference type="CTD" id="163590"/>
<dbReference type="MGI" id="MGI:3582695">
    <property type="gene designation" value="Tor1aip2"/>
</dbReference>
<dbReference type="VEuPathDB" id="HostDB:ENSMUSG00000050565"/>
<dbReference type="GeneTree" id="ENSGT00390000012166"/>
<dbReference type="HOGENOM" id="CLU_2139075_0_0_1"/>
<dbReference type="OrthoDB" id="9816117at2759"/>
<dbReference type="PhylomeDB" id="Q9ER81"/>
<dbReference type="BioGRID-ORCS" id="240832">
    <property type="hits" value="7 hits in 74 CRISPR screens"/>
</dbReference>
<dbReference type="ChiTaRS" id="Tor1aip2">
    <property type="organism name" value="mouse"/>
</dbReference>
<dbReference type="Proteomes" id="UP000000589">
    <property type="component" value="Chromosome 1"/>
</dbReference>
<dbReference type="Bgee" id="ENSMUSG00000050565">
    <property type="expression patterns" value="Expressed in placenta labyrinth and 281 other cell types or tissues"/>
</dbReference>
<dbReference type="ExpressionAtlas" id="Q9ER81">
    <property type="expression patterns" value="baseline and differential"/>
</dbReference>
<dbReference type="GO" id="GO:0005783">
    <property type="term" value="C:endoplasmic reticulum"/>
    <property type="evidence" value="ECO:0000314"/>
    <property type="project" value="MGI"/>
</dbReference>
<reference key="1">
    <citation type="submission" date="1999-12" db="EMBL/GenBank/DDBJ databases">
        <title>characterization of ifrg15 and ifrg28, two newly identified interferon responsive gene.</title>
        <authorList>
            <person name="Meritet J.F."/>
            <person name="Dron M."/>
            <person name="Tovey M."/>
        </authorList>
    </citation>
    <scope>NUCLEOTIDE SEQUENCE [MRNA]</scope>
    <scope>INDUCTION BY INTERFERON</scope>
    <source>
        <strain>DBA/2J</strain>
    </source>
</reference>
<reference key="2">
    <citation type="journal article" date="2005" name="Science">
        <title>The transcriptional landscape of the mammalian genome.</title>
        <authorList>
            <person name="Carninci P."/>
            <person name="Kasukawa T."/>
            <person name="Katayama S."/>
            <person name="Gough J."/>
            <person name="Frith M.C."/>
            <person name="Maeda N."/>
            <person name="Oyama R."/>
            <person name="Ravasi T."/>
            <person name="Lenhard B."/>
            <person name="Wells C."/>
            <person name="Kodzius R."/>
            <person name="Shimokawa K."/>
            <person name="Bajic V.B."/>
            <person name="Brenner S.E."/>
            <person name="Batalov S."/>
            <person name="Forrest A.R."/>
            <person name="Zavolan M."/>
            <person name="Davis M.J."/>
            <person name="Wilming L.G."/>
            <person name="Aidinis V."/>
            <person name="Allen J.E."/>
            <person name="Ambesi-Impiombato A."/>
            <person name="Apweiler R."/>
            <person name="Aturaliya R.N."/>
            <person name="Bailey T.L."/>
            <person name="Bansal M."/>
            <person name="Baxter L."/>
            <person name="Beisel K.W."/>
            <person name="Bersano T."/>
            <person name="Bono H."/>
            <person name="Chalk A.M."/>
            <person name="Chiu K.P."/>
            <person name="Choudhary V."/>
            <person name="Christoffels A."/>
            <person name="Clutterbuck D.R."/>
            <person name="Crowe M.L."/>
            <person name="Dalla E."/>
            <person name="Dalrymple B.P."/>
            <person name="de Bono B."/>
            <person name="Della Gatta G."/>
            <person name="di Bernardo D."/>
            <person name="Down T."/>
            <person name="Engstrom P."/>
            <person name="Fagiolini M."/>
            <person name="Faulkner G."/>
            <person name="Fletcher C.F."/>
            <person name="Fukushima T."/>
            <person name="Furuno M."/>
            <person name="Futaki S."/>
            <person name="Gariboldi M."/>
            <person name="Georgii-Hemming P."/>
            <person name="Gingeras T.R."/>
            <person name="Gojobori T."/>
            <person name="Green R.E."/>
            <person name="Gustincich S."/>
            <person name="Harbers M."/>
            <person name="Hayashi Y."/>
            <person name="Hensch T.K."/>
            <person name="Hirokawa N."/>
            <person name="Hill D."/>
            <person name="Huminiecki L."/>
            <person name="Iacono M."/>
            <person name="Ikeo K."/>
            <person name="Iwama A."/>
            <person name="Ishikawa T."/>
            <person name="Jakt M."/>
            <person name="Kanapin A."/>
            <person name="Katoh M."/>
            <person name="Kawasawa Y."/>
            <person name="Kelso J."/>
            <person name="Kitamura H."/>
            <person name="Kitano H."/>
            <person name="Kollias G."/>
            <person name="Krishnan S.P."/>
            <person name="Kruger A."/>
            <person name="Kummerfeld S.K."/>
            <person name="Kurochkin I.V."/>
            <person name="Lareau L.F."/>
            <person name="Lazarevic D."/>
            <person name="Lipovich L."/>
            <person name="Liu J."/>
            <person name="Liuni S."/>
            <person name="McWilliam S."/>
            <person name="Madan Babu M."/>
            <person name="Madera M."/>
            <person name="Marchionni L."/>
            <person name="Matsuda H."/>
            <person name="Matsuzawa S."/>
            <person name="Miki H."/>
            <person name="Mignone F."/>
            <person name="Miyake S."/>
            <person name="Morris K."/>
            <person name="Mottagui-Tabar S."/>
            <person name="Mulder N."/>
            <person name="Nakano N."/>
            <person name="Nakauchi H."/>
            <person name="Ng P."/>
            <person name="Nilsson R."/>
            <person name="Nishiguchi S."/>
            <person name="Nishikawa S."/>
            <person name="Nori F."/>
            <person name="Ohara O."/>
            <person name="Okazaki Y."/>
            <person name="Orlando V."/>
            <person name="Pang K.C."/>
            <person name="Pavan W.J."/>
            <person name="Pavesi G."/>
            <person name="Pesole G."/>
            <person name="Petrovsky N."/>
            <person name="Piazza S."/>
            <person name="Reed J."/>
            <person name="Reid J.F."/>
            <person name="Ring B.Z."/>
            <person name="Ringwald M."/>
            <person name="Rost B."/>
            <person name="Ruan Y."/>
            <person name="Salzberg S.L."/>
            <person name="Sandelin A."/>
            <person name="Schneider C."/>
            <person name="Schoenbach C."/>
            <person name="Sekiguchi K."/>
            <person name="Semple C.A."/>
            <person name="Seno S."/>
            <person name="Sessa L."/>
            <person name="Sheng Y."/>
            <person name="Shibata Y."/>
            <person name="Shimada H."/>
            <person name="Shimada K."/>
            <person name="Silva D."/>
            <person name="Sinclair B."/>
            <person name="Sperling S."/>
            <person name="Stupka E."/>
            <person name="Sugiura K."/>
            <person name="Sultana R."/>
            <person name="Takenaka Y."/>
            <person name="Taki K."/>
            <person name="Tammoja K."/>
            <person name="Tan S.L."/>
            <person name="Tang S."/>
            <person name="Taylor M.S."/>
            <person name="Tegner J."/>
            <person name="Teichmann S.A."/>
            <person name="Ueda H.R."/>
            <person name="van Nimwegen E."/>
            <person name="Verardo R."/>
            <person name="Wei C.L."/>
            <person name="Yagi K."/>
            <person name="Yamanishi H."/>
            <person name="Zabarovsky E."/>
            <person name="Zhu S."/>
            <person name="Zimmer A."/>
            <person name="Hide W."/>
            <person name="Bult C."/>
            <person name="Grimmond S.M."/>
            <person name="Teasdale R.D."/>
            <person name="Liu E.T."/>
            <person name="Brusic V."/>
            <person name="Quackenbush J."/>
            <person name="Wahlestedt C."/>
            <person name="Mattick J.S."/>
            <person name="Hume D.A."/>
            <person name="Kai C."/>
            <person name="Sasaki D."/>
            <person name="Tomaru Y."/>
            <person name="Fukuda S."/>
            <person name="Kanamori-Katayama M."/>
            <person name="Suzuki M."/>
            <person name="Aoki J."/>
            <person name="Arakawa T."/>
            <person name="Iida J."/>
            <person name="Imamura K."/>
            <person name="Itoh M."/>
            <person name="Kato T."/>
            <person name="Kawaji H."/>
            <person name="Kawagashira N."/>
            <person name="Kawashima T."/>
            <person name="Kojima M."/>
            <person name="Kondo S."/>
            <person name="Konno H."/>
            <person name="Nakano K."/>
            <person name="Ninomiya N."/>
            <person name="Nishio T."/>
            <person name="Okada M."/>
            <person name="Plessy C."/>
            <person name="Shibata K."/>
            <person name="Shiraki T."/>
            <person name="Suzuki S."/>
            <person name="Tagami M."/>
            <person name="Waki K."/>
            <person name="Watahiki A."/>
            <person name="Okamura-Oho Y."/>
            <person name="Suzuki H."/>
            <person name="Kawai J."/>
            <person name="Hayashizaki Y."/>
        </authorList>
    </citation>
    <scope>NUCLEOTIDE SEQUENCE [LARGE SCALE MRNA]</scope>
    <source>
        <strain>C57BL/6J</strain>
        <tissue>Bone marrow</tissue>
    </source>
</reference>
<reference key="3">
    <citation type="journal article" date="2009" name="PLoS Biol.">
        <title>Lineage-specific biology revealed by a finished genome assembly of the mouse.</title>
        <authorList>
            <person name="Church D.M."/>
            <person name="Goodstadt L."/>
            <person name="Hillier L.W."/>
            <person name="Zody M.C."/>
            <person name="Goldstein S."/>
            <person name="She X."/>
            <person name="Bult C.J."/>
            <person name="Agarwala R."/>
            <person name="Cherry J.L."/>
            <person name="DiCuccio M."/>
            <person name="Hlavina W."/>
            <person name="Kapustin Y."/>
            <person name="Meric P."/>
            <person name="Maglott D."/>
            <person name="Birtle Z."/>
            <person name="Marques A.C."/>
            <person name="Graves T."/>
            <person name="Zhou S."/>
            <person name="Teague B."/>
            <person name="Potamousis K."/>
            <person name="Churas C."/>
            <person name="Place M."/>
            <person name="Herschleb J."/>
            <person name="Runnheim R."/>
            <person name="Forrest D."/>
            <person name="Amos-Landgraf J."/>
            <person name="Schwartz D.C."/>
            <person name="Cheng Z."/>
            <person name="Lindblad-Toh K."/>
            <person name="Eichler E.E."/>
            <person name="Ponting C.P."/>
        </authorList>
    </citation>
    <scope>NUCLEOTIDE SEQUENCE [LARGE SCALE GENOMIC DNA]</scope>
    <source>
        <strain>C57BL/6J</strain>
    </source>
</reference>
<reference key="4">
    <citation type="journal article" date="2004" name="Genome Res.">
        <title>The status, quality, and expansion of the NIH full-length cDNA project: the Mammalian Gene Collection (MGC).</title>
        <authorList>
            <consortium name="The MGC Project Team"/>
        </authorList>
    </citation>
    <scope>NUCLEOTIDE SEQUENCE [LARGE SCALE MRNA]</scope>
    <source>
        <strain>Czech II</strain>
        <tissue>Mammary tumor</tissue>
    </source>
</reference>
<reference key="5">
    <citation type="journal article" date="2010" name="Cell">
        <title>A tissue-specific atlas of mouse protein phosphorylation and expression.</title>
        <authorList>
            <person name="Huttlin E.L."/>
            <person name="Jedrychowski M.P."/>
            <person name="Elias J.E."/>
            <person name="Goswami T."/>
            <person name="Rad R."/>
            <person name="Beausoleil S.A."/>
            <person name="Villen J."/>
            <person name="Haas W."/>
            <person name="Sowa M.E."/>
            <person name="Gygi S.P."/>
        </authorList>
    </citation>
    <scope>IDENTIFICATION BY MASS SPECTROMETRY [LARGE SCALE ANALYSIS]</scope>
    <source>
        <tissue>Kidney</tissue>
        <tissue>Testis</tissue>
    </source>
</reference>
<reference key="6">
    <citation type="journal article" date="2012" name="Gene">
        <title>Sequence analysis, expression patterns and transcriptional regulation of mouse Ifrg15 during preimplantation embryonic development.</title>
        <authorList>
            <person name="Wu F.R."/>
            <person name="Ding B."/>
            <person name="Qi B."/>
            <person name="Shang M.B."/>
            <person name="Yang X.X."/>
            <person name="Liu Y."/>
            <person name="Li W.Y."/>
        </authorList>
    </citation>
    <scope>TISSUE SPECIFICITY</scope>
</reference>
<organism>
    <name type="scientific">Mus musculus</name>
    <name type="common">Mouse</name>
    <dbReference type="NCBI Taxonomy" id="10090"/>
    <lineage>
        <taxon>Eukaryota</taxon>
        <taxon>Metazoa</taxon>
        <taxon>Chordata</taxon>
        <taxon>Craniata</taxon>
        <taxon>Vertebrata</taxon>
        <taxon>Euteleostomi</taxon>
        <taxon>Mammalia</taxon>
        <taxon>Eutheria</taxon>
        <taxon>Euarchontoglires</taxon>
        <taxon>Glires</taxon>
        <taxon>Rodentia</taxon>
        <taxon>Myomorpha</taxon>
        <taxon>Muroidea</taxon>
        <taxon>Muridae</taxon>
        <taxon>Murinae</taxon>
        <taxon>Mus</taxon>
        <taxon>Mus</taxon>
    </lineage>
</organism>
<accession>Q9ER81</accession>
<accession>Q3U8P1</accession>
<accession>Q3UAA2</accession>
<accession>Q9D178</accession>
<sequence length="131" mass="15278">MFSDNSHCPDCGQQWFPSLELGHWLYQTELVENECYQVFLDRINRADYCPECYPDNPANRSLVLPWSFPLEWAPQNLTRWTFEKACHPFLLGPPLVRKKIHDSRVAGFNPALQLILSRTDKTLNKKLGQSK</sequence>
<protein>
    <recommendedName>
        <fullName>Torsin-1A-interacting protein 2, isoform IFRG15</fullName>
    </recommendedName>
    <alternativeName>
        <fullName>15 kDa interferon-responsive protein</fullName>
        <shortName>IFRG15</shortName>
    </alternativeName>
</protein>
<comment type="alternative products">
    <event type="alternative splicing"/>
    <isoform>
        <id>Q9ER81-1</id>
        <name>Ifrg15</name>
        <sequence type="displayed"/>
    </isoform>
    <isoform>
        <id>Q8BYU6-1</id>
        <name>Tor1aip2</name>
        <sequence type="external"/>
    </isoform>
</comment>
<comment type="developmental stage">
    <text>Expressed in oocytes and preimplantation embryos with expression peaking at the blastocyst stage.</text>
</comment>
<comment type="induction">
    <text evidence="1">Induced by interferon alpha.</text>
</comment>
<comment type="miscellaneous">
    <molecule>Isoform Ifrg15</molecule>
    <text>Dubious isoform.</text>
</comment>
<keyword id="KW-0025">Alternative splicing</keyword>
<keyword id="KW-1185">Reference proteome</keyword>
<gene>
    <name type="primary">Tor1aip2</name>
    <name type="synonym">Ifrg15</name>
</gene>